<comment type="function">
    <text evidence="1">Protein S19 forms a complex with S13 that binds strongly to the 16S ribosomal RNA.</text>
</comment>
<comment type="similarity">
    <text evidence="1">Belongs to the universal ribosomal protein uS19 family.</text>
</comment>
<gene>
    <name evidence="1" type="primary">rpsS</name>
    <name type="ordered locus">DET0478</name>
</gene>
<accession>Q3Z977</accession>
<protein>
    <recommendedName>
        <fullName evidence="1">Small ribosomal subunit protein uS19</fullName>
    </recommendedName>
    <alternativeName>
        <fullName evidence="2">30S ribosomal protein S19</fullName>
    </alternativeName>
</protein>
<organism>
    <name type="scientific">Dehalococcoides mccartyi (strain ATCC BAA-2266 / KCTC 15142 / 195)</name>
    <name type="common">Dehalococcoides ethenogenes (strain 195)</name>
    <dbReference type="NCBI Taxonomy" id="243164"/>
    <lineage>
        <taxon>Bacteria</taxon>
        <taxon>Bacillati</taxon>
        <taxon>Chloroflexota</taxon>
        <taxon>Dehalococcoidia</taxon>
        <taxon>Dehalococcoidales</taxon>
        <taxon>Dehalococcoidaceae</taxon>
        <taxon>Dehalococcoides</taxon>
    </lineage>
</organism>
<proteinExistence type="inferred from homology"/>
<name>RS19_DEHM1</name>
<dbReference type="EMBL" id="CP000027">
    <property type="protein sequence ID" value="AAW40187.1"/>
    <property type="molecule type" value="Genomic_DNA"/>
</dbReference>
<dbReference type="RefSeq" id="WP_010936255.1">
    <property type="nucleotide sequence ID" value="NC_002936.3"/>
</dbReference>
<dbReference type="SMR" id="Q3Z977"/>
<dbReference type="FunCoup" id="Q3Z977">
    <property type="interactions" value="333"/>
</dbReference>
<dbReference type="STRING" id="243164.DET0478"/>
<dbReference type="GeneID" id="3230151"/>
<dbReference type="KEGG" id="det:DET0478"/>
<dbReference type="eggNOG" id="COG0185">
    <property type="taxonomic scope" value="Bacteria"/>
</dbReference>
<dbReference type="HOGENOM" id="CLU_144911_0_1_0"/>
<dbReference type="InParanoid" id="Q3Z977"/>
<dbReference type="Proteomes" id="UP000008289">
    <property type="component" value="Chromosome"/>
</dbReference>
<dbReference type="GO" id="GO:0005737">
    <property type="term" value="C:cytoplasm"/>
    <property type="evidence" value="ECO:0007669"/>
    <property type="project" value="UniProtKB-ARBA"/>
</dbReference>
<dbReference type="GO" id="GO:0015935">
    <property type="term" value="C:small ribosomal subunit"/>
    <property type="evidence" value="ECO:0007669"/>
    <property type="project" value="InterPro"/>
</dbReference>
<dbReference type="GO" id="GO:0019843">
    <property type="term" value="F:rRNA binding"/>
    <property type="evidence" value="ECO:0007669"/>
    <property type="project" value="UniProtKB-UniRule"/>
</dbReference>
<dbReference type="GO" id="GO:0003735">
    <property type="term" value="F:structural constituent of ribosome"/>
    <property type="evidence" value="ECO:0007669"/>
    <property type="project" value="InterPro"/>
</dbReference>
<dbReference type="GO" id="GO:0000028">
    <property type="term" value="P:ribosomal small subunit assembly"/>
    <property type="evidence" value="ECO:0007669"/>
    <property type="project" value="TreeGrafter"/>
</dbReference>
<dbReference type="GO" id="GO:0006412">
    <property type="term" value="P:translation"/>
    <property type="evidence" value="ECO:0007669"/>
    <property type="project" value="UniProtKB-UniRule"/>
</dbReference>
<dbReference type="FunFam" id="3.30.860.10:FF:000001">
    <property type="entry name" value="30S ribosomal protein S19"/>
    <property type="match status" value="1"/>
</dbReference>
<dbReference type="Gene3D" id="3.30.860.10">
    <property type="entry name" value="30s Ribosomal Protein S19, Chain A"/>
    <property type="match status" value="1"/>
</dbReference>
<dbReference type="HAMAP" id="MF_00531">
    <property type="entry name" value="Ribosomal_uS19"/>
    <property type="match status" value="1"/>
</dbReference>
<dbReference type="InterPro" id="IPR002222">
    <property type="entry name" value="Ribosomal_uS19"/>
</dbReference>
<dbReference type="InterPro" id="IPR005732">
    <property type="entry name" value="Ribosomal_uS19_bac-type"/>
</dbReference>
<dbReference type="InterPro" id="IPR020934">
    <property type="entry name" value="Ribosomal_uS19_CS"/>
</dbReference>
<dbReference type="InterPro" id="IPR023575">
    <property type="entry name" value="Ribosomal_uS19_SF"/>
</dbReference>
<dbReference type="NCBIfam" id="TIGR01050">
    <property type="entry name" value="rpsS_bact"/>
    <property type="match status" value="1"/>
</dbReference>
<dbReference type="PANTHER" id="PTHR11880">
    <property type="entry name" value="RIBOSOMAL PROTEIN S19P FAMILY MEMBER"/>
    <property type="match status" value="1"/>
</dbReference>
<dbReference type="PANTHER" id="PTHR11880:SF8">
    <property type="entry name" value="SMALL RIBOSOMAL SUBUNIT PROTEIN US19M"/>
    <property type="match status" value="1"/>
</dbReference>
<dbReference type="Pfam" id="PF00203">
    <property type="entry name" value="Ribosomal_S19"/>
    <property type="match status" value="1"/>
</dbReference>
<dbReference type="PIRSF" id="PIRSF002144">
    <property type="entry name" value="Ribosomal_S19"/>
    <property type="match status" value="1"/>
</dbReference>
<dbReference type="PRINTS" id="PR00975">
    <property type="entry name" value="RIBOSOMALS19"/>
</dbReference>
<dbReference type="SUPFAM" id="SSF54570">
    <property type="entry name" value="Ribosomal protein S19"/>
    <property type="match status" value="1"/>
</dbReference>
<dbReference type="PROSITE" id="PS00323">
    <property type="entry name" value="RIBOSOMAL_S19"/>
    <property type="match status" value="1"/>
</dbReference>
<reference key="1">
    <citation type="journal article" date="2005" name="Science">
        <title>Genome sequence of the PCE-dechlorinating bacterium Dehalococcoides ethenogenes.</title>
        <authorList>
            <person name="Seshadri R."/>
            <person name="Adrian L."/>
            <person name="Fouts D.E."/>
            <person name="Eisen J.A."/>
            <person name="Phillippy A.M."/>
            <person name="Methe B.A."/>
            <person name="Ward N.L."/>
            <person name="Nelson W.C."/>
            <person name="DeBoy R.T."/>
            <person name="Khouri H.M."/>
            <person name="Kolonay J.F."/>
            <person name="Dodson R.J."/>
            <person name="Daugherty S.C."/>
            <person name="Brinkac L.M."/>
            <person name="Sullivan S.A."/>
            <person name="Madupu R."/>
            <person name="Nelson K.E."/>
            <person name="Kang K.H."/>
            <person name="Impraim M."/>
            <person name="Tran K."/>
            <person name="Robinson J.M."/>
            <person name="Forberger H.A."/>
            <person name="Fraser C.M."/>
            <person name="Zinder S.H."/>
            <person name="Heidelberg J.F."/>
        </authorList>
    </citation>
    <scope>NUCLEOTIDE SEQUENCE [LARGE SCALE GENOMIC DNA]</scope>
    <source>
        <strain>ATCC BAA-2266 / KCTC 15142 / 195</strain>
    </source>
</reference>
<feature type="chain" id="PRO_0000265354" description="Small ribosomal subunit protein uS19">
    <location>
        <begin position="1"/>
        <end position="93"/>
    </location>
</feature>
<evidence type="ECO:0000255" key="1">
    <source>
        <dbReference type="HAMAP-Rule" id="MF_00531"/>
    </source>
</evidence>
<evidence type="ECO:0000305" key="2"/>
<sequence>MSRSVKKGPALCPKLMKKVEVASATNQKSIIKTWARWSTITPLMVGLNVGVHDGRRHVPIYITENMVGHRLGEFTTTRNFRGHAKAEKVSQVK</sequence>
<keyword id="KW-0687">Ribonucleoprotein</keyword>
<keyword id="KW-0689">Ribosomal protein</keyword>
<keyword id="KW-0694">RNA-binding</keyword>
<keyword id="KW-0699">rRNA-binding</keyword>